<name>RL21_DEIGD</name>
<proteinExistence type="inferred from homology"/>
<feature type="chain" id="PRO_0000270661" description="Large ribosomal subunit protein bL21">
    <location>
        <begin position="1"/>
        <end position="99"/>
    </location>
</feature>
<accession>Q1IW74</accession>
<dbReference type="EMBL" id="CP000359">
    <property type="protein sequence ID" value="ABF46510.1"/>
    <property type="molecule type" value="Genomic_DNA"/>
</dbReference>
<dbReference type="RefSeq" id="WP_011531331.1">
    <property type="nucleotide sequence ID" value="NC_008025.1"/>
</dbReference>
<dbReference type="SMR" id="Q1IW74"/>
<dbReference type="STRING" id="319795.Dgeo_2216"/>
<dbReference type="KEGG" id="dge:Dgeo_2216"/>
<dbReference type="eggNOG" id="COG0261">
    <property type="taxonomic scope" value="Bacteria"/>
</dbReference>
<dbReference type="HOGENOM" id="CLU_061463_3_2_0"/>
<dbReference type="Proteomes" id="UP000002431">
    <property type="component" value="Chromosome"/>
</dbReference>
<dbReference type="GO" id="GO:0005737">
    <property type="term" value="C:cytoplasm"/>
    <property type="evidence" value="ECO:0007669"/>
    <property type="project" value="UniProtKB-ARBA"/>
</dbReference>
<dbReference type="GO" id="GO:1990904">
    <property type="term" value="C:ribonucleoprotein complex"/>
    <property type="evidence" value="ECO:0007669"/>
    <property type="project" value="UniProtKB-KW"/>
</dbReference>
<dbReference type="GO" id="GO:0005840">
    <property type="term" value="C:ribosome"/>
    <property type="evidence" value="ECO:0007669"/>
    <property type="project" value="UniProtKB-KW"/>
</dbReference>
<dbReference type="GO" id="GO:0019843">
    <property type="term" value="F:rRNA binding"/>
    <property type="evidence" value="ECO:0007669"/>
    <property type="project" value="UniProtKB-UniRule"/>
</dbReference>
<dbReference type="GO" id="GO:0003735">
    <property type="term" value="F:structural constituent of ribosome"/>
    <property type="evidence" value="ECO:0007669"/>
    <property type="project" value="InterPro"/>
</dbReference>
<dbReference type="GO" id="GO:0006412">
    <property type="term" value="P:translation"/>
    <property type="evidence" value="ECO:0007669"/>
    <property type="project" value="UniProtKB-UniRule"/>
</dbReference>
<dbReference type="HAMAP" id="MF_01363">
    <property type="entry name" value="Ribosomal_bL21"/>
    <property type="match status" value="1"/>
</dbReference>
<dbReference type="InterPro" id="IPR028909">
    <property type="entry name" value="bL21-like"/>
</dbReference>
<dbReference type="InterPro" id="IPR036164">
    <property type="entry name" value="bL21-like_sf"/>
</dbReference>
<dbReference type="InterPro" id="IPR001787">
    <property type="entry name" value="Ribosomal_bL21"/>
</dbReference>
<dbReference type="NCBIfam" id="TIGR00061">
    <property type="entry name" value="L21"/>
    <property type="match status" value="1"/>
</dbReference>
<dbReference type="PANTHER" id="PTHR21349">
    <property type="entry name" value="50S RIBOSOMAL PROTEIN L21"/>
    <property type="match status" value="1"/>
</dbReference>
<dbReference type="PANTHER" id="PTHR21349:SF0">
    <property type="entry name" value="LARGE RIBOSOMAL SUBUNIT PROTEIN BL21M"/>
    <property type="match status" value="1"/>
</dbReference>
<dbReference type="Pfam" id="PF00829">
    <property type="entry name" value="Ribosomal_L21p"/>
    <property type="match status" value="1"/>
</dbReference>
<dbReference type="SUPFAM" id="SSF141091">
    <property type="entry name" value="L21p-like"/>
    <property type="match status" value="1"/>
</dbReference>
<evidence type="ECO:0000255" key="1">
    <source>
        <dbReference type="HAMAP-Rule" id="MF_01363"/>
    </source>
</evidence>
<evidence type="ECO:0000305" key="2"/>
<keyword id="KW-0687">Ribonucleoprotein</keyword>
<keyword id="KW-0689">Ribosomal protein</keyword>
<keyword id="KW-0694">RNA-binding</keyword>
<keyword id="KW-0699">rRNA-binding</keyword>
<comment type="function">
    <text evidence="1">This protein binds to 23S rRNA in the presence of protein L20.</text>
</comment>
<comment type="subunit">
    <text evidence="1">Part of the 50S ribosomal subunit. Contacts protein L20.</text>
</comment>
<comment type="similarity">
    <text evidence="1">Belongs to the bacterial ribosomal protein bL21 family.</text>
</comment>
<gene>
    <name evidence="1" type="primary">rplU</name>
    <name type="ordered locus">Dgeo_2216</name>
</gene>
<reference key="1">
    <citation type="submission" date="2006-04" db="EMBL/GenBank/DDBJ databases">
        <title>Complete sequence of chromosome of Deinococcus geothermalis DSM 11300.</title>
        <authorList>
            <person name="Copeland A."/>
            <person name="Lucas S."/>
            <person name="Lapidus A."/>
            <person name="Barry K."/>
            <person name="Detter J.C."/>
            <person name="Glavina del Rio T."/>
            <person name="Hammon N."/>
            <person name="Israni S."/>
            <person name="Dalin E."/>
            <person name="Tice H."/>
            <person name="Pitluck S."/>
            <person name="Brettin T."/>
            <person name="Bruce D."/>
            <person name="Han C."/>
            <person name="Tapia R."/>
            <person name="Saunders E."/>
            <person name="Gilna P."/>
            <person name="Schmutz J."/>
            <person name="Larimer F."/>
            <person name="Land M."/>
            <person name="Hauser L."/>
            <person name="Kyrpides N."/>
            <person name="Kim E."/>
            <person name="Daly M.J."/>
            <person name="Fredrickson J.K."/>
            <person name="Makarova K.S."/>
            <person name="Gaidamakova E.K."/>
            <person name="Zhai M."/>
            <person name="Richardson P."/>
        </authorList>
    </citation>
    <scope>NUCLEOTIDE SEQUENCE [LARGE SCALE GENOMIC DNA]</scope>
    <source>
        <strain>DSM 11300 / CIP 105573 / AG-3a</strain>
    </source>
</reference>
<sequence length="99" mass="11073">MFAIIQSGGKQYRVQEGDVVRVETLKGEAGDKLELKPILVGGNDTLLGDEAARFTVNAEIVEHGLGKKIYIRKYKSGIQYRRRNGHRQPYTAIRITSIA</sequence>
<organism>
    <name type="scientific">Deinococcus geothermalis (strain DSM 11300 / CIP 105573 / AG-3a)</name>
    <dbReference type="NCBI Taxonomy" id="319795"/>
    <lineage>
        <taxon>Bacteria</taxon>
        <taxon>Thermotogati</taxon>
        <taxon>Deinococcota</taxon>
        <taxon>Deinococci</taxon>
        <taxon>Deinococcales</taxon>
        <taxon>Deinococcaceae</taxon>
        <taxon>Deinococcus</taxon>
    </lineage>
</organism>
<protein>
    <recommendedName>
        <fullName evidence="1">Large ribosomal subunit protein bL21</fullName>
    </recommendedName>
    <alternativeName>
        <fullName evidence="2">50S ribosomal protein L21</fullName>
    </alternativeName>
</protein>